<sequence>MIFIHIIKIKSSFNHFSQSSDGRSNGGGSSSGDSVSTTSDGLLTTGTSPNTSSTSLDGLLTTERTIVSSVLLDFQLLDLSSQRGTITDTVLTSDTNLLSSFSPVFKKEKISKYVSKS</sequence>
<feature type="chain" id="PRO_0000431061" description="Putative uncharacterized protein OPI11">
    <location>
        <begin position="1"/>
        <end position="117"/>
    </location>
</feature>
<feature type="region of interest" description="Disordered" evidence="1">
    <location>
        <begin position="16"/>
        <end position="56"/>
    </location>
</feature>
<feature type="compositionally biased region" description="Low complexity" evidence="1">
    <location>
        <begin position="31"/>
        <end position="56"/>
    </location>
</feature>
<comment type="disruption phenotype">
    <text evidence="2">Deletion results in the overproduction and secretion of inositol to the growth medium.</text>
</comment>
<comment type="miscellaneous">
    <text evidence="4">Partially overlaps RPL43A. Disruption phenotypes caused by deletion of this gene may also be a result of a defect in its overlapping gene.</text>
</comment>
<comment type="caution">
    <text evidence="5">Product of a dubious gene prediction unlikely to encode a functional protein. Because of that it is not part of the S.cerevisiae S288c complete/reference proteome set.</text>
</comment>
<gene>
    <name evidence="3" type="primary">OPI11</name>
    <name evidence="6" type="ordered locus">YPR044C</name>
</gene>
<organism>
    <name type="scientific">Saccharomyces cerevisiae (strain ATCC 204508 / S288c)</name>
    <name type="common">Baker's yeast</name>
    <dbReference type="NCBI Taxonomy" id="559292"/>
    <lineage>
        <taxon>Eukaryota</taxon>
        <taxon>Fungi</taxon>
        <taxon>Dikarya</taxon>
        <taxon>Ascomycota</taxon>
        <taxon>Saccharomycotina</taxon>
        <taxon>Saccharomycetes</taxon>
        <taxon>Saccharomycetales</taxon>
        <taxon>Saccharomycetaceae</taxon>
        <taxon>Saccharomyces</taxon>
    </lineage>
</organism>
<accession>A0A023PZI1</accession>
<protein>
    <recommendedName>
        <fullName evidence="4">Putative uncharacterized protein OPI11</fullName>
    </recommendedName>
    <alternativeName>
        <fullName evidence="3">Overproducer of inositol protein 11</fullName>
    </alternativeName>
</protein>
<name>OPI11_YEAST</name>
<reference key="1">
    <citation type="journal article" date="1997" name="Nature">
        <title>The nucleotide sequence of Saccharomyces cerevisiae chromosome XVI.</title>
        <authorList>
            <person name="Bussey H."/>
            <person name="Storms R.K."/>
            <person name="Ahmed A."/>
            <person name="Albermann K."/>
            <person name="Allen E."/>
            <person name="Ansorge W."/>
            <person name="Araujo R."/>
            <person name="Aparicio A."/>
            <person name="Barrell B.G."/>
            <person name="Badcock K."/>
            <person name="Benes V."/>
            <person name="Botstein D."/>
            <person name="Bowman S."/>
            <person name="Brueckner M."/>
            <person name="Carpenter J."/>
            <person name="Cherry J.M."/>
            <person name="Chung E."/>
            <person name="Churcher C.M."/>
            <person name="Coster F."/>
            <person name="Davis K."/>
            <person name="Davis R.W."/>
            <person name="Dietrich F.S."/>
            <person name="Delius H."/>
            <person name="DiPaolo T."/>
            <person name="Dubois E."/>
            <person name="Duesterhoeft A."/>
            <person name="Duncan M."/>
            <person name="Floeth M."/>
            <person name="Fortin N."/>
            <person name="Friesen J.D."/>
            <person name="Fritz C."/>
            <person name="Goffeau A."/>
            <person name="Hall J."/>
            <person name="Hebling U."/>
            <person name="Heumann K."/>
            <person name="Hilbert H."/>
            <person name="Hillier L.W."/>
            <person name="Hunicke-Smith S."/>
            <person name="Hyman R.W."/>
            <person name="Johnston M."/>
            <person name="Kalman S."/>
            <person name="Kleine K."/>
            <person name="Komp C."/>
            <person name="Kurdi O."/>
            <person name="Lashkari D."/>
            <person name="Lew H."/>
            <person name="Lin A."/>
            <person name="Lin D."/>
            <person name="Louis E.J."/>
            <person name="Marathe R."/>
            <person name="Messenguy F."/>
            <person name="Mewes H.-W."/>
            <person name="Mirtipati S."/>
            <person name="Moestl D."/>
            <person name="Mueller-Auer S."/>
            <person name="Namath A."/>
            <person name="Nentwich U."/>
            <person name="Oefner P."/>
            <person name="Pearson D."/>
            <person name="Petel F.X."/>
            <person name="Pohl T.M."/>
            <person name="Purnelle B."/>
            <person name="Rajandream M.A."/>
            <person name="Rechmann S."/>
            <person name="Rieger M."/>
            <person name="Riles L."/>
            <person name="Roberts D."/>
            <person name="Schaefer M."/>
            <person name="Scharfe M."/>
            <person name="Scherens B."/>
            <person name="Schramm S."/>
            <person name="Schroeder M."/>
            <person name="Sdicu A.-M."/>
            <person name="Tettelin H."/>
            <person name="Urrestarazu L.A."/>
            <person name="Ushinsky S."/>
            <person name="Vierendeels F."/>
            <person name="Vissers S."/>
            <person name="Voss H."/>
            <person name="Walsh S.V."/>
            <person name="Wambutt R."/>
            <person name="Wang Y."/>
            <person name="Wedler E."/>
            <person name="Wedler H."/>
            <person name="Winnett E."/>
            <person name="Zhong W.-W."/>
            <person name="Zollner A."/>
            <person name="Vo D.H."/>
            <person name="Hani J."/>
        </authorList>
    </citation>
    <scope>NUCLEOTIDE SEQUENCE [LARGE SCALE GENOMIC DNA]</scope>
    <source>
        <strain>ATCC 204508 / S288c</strain>
    </source>
</reference>
<reference key="2">
    <citation type="journal article" date="2014" name="G3 (Bethesda)">
        <title>The reference genome sequence of Saccharomyces cerevisiae: Then and now.</title>
        <authorList>
            <person name="Engel S.R."/>
            <person name="Dietrich F.S."/>
            <person name="Fisk D.G."/>
            <person name="Binkley G."/>
            <person name="Balakrishnan R."/>
            <person name="Costanzo M.C."/>
            <person name="Dwight S.S."/>
            <person name="Hitz B.C."/>
            <person name="Karra K."/>
            <person name="Nash R.S."/>
            <person name="Weng S."/>
            <person name="Wong E.D."/>
            <person name="Lloyd P."/>
            <person name="Skrzypek M.S."/>
            <person name="Miyasato S.R."/>
            <person name="Simison M."/>
            <person name="Cherry J.M."/>
        </authorList>
    </citation>
    <scope>GENOME REANNOTATION</scope>
    <source>
        <strain>ATCC 204508 / S288c</strain>
    </source>
</reference>
<reference key="3">
    <citation type="journal article" date="2006" name="Genetics">
        <title>Genomic analysis of the Opi- phenotype.</title>
        <authorList>
            <person name="Hancock L.C."/>
            <person name="Behta R.P."/>
            <person name="Lopes J.M."/>
        </authorList>
    </citation>
    <scope>DISRUPTION PHENOTYPE</scope>
</reference>
<proteinExistence type="uncertain"/>
<evidence type="ECO:0000256" key="1">
    <source>
        <dbReference type="SAM" id="MobiDB-lite"/>
    </source>
</evidence>
<evidence type="ECO:0000269" key="2">
    <source>
    </source>
</evidence>
<evidence type="ECO:0000303" key="3">
    <source>
    </source>
</evidence>
<evidence type="ECO:0000305" key="4"/>
<evidence type="ECO:0000305" key="5">
    <source>
    </source>
</evidence>
<evidence type="ECO:0000312" key="6">
    <source>
        <dbReference type="SGD" id="S000006248"/>
    </source>
</evidence>
<dbReference type="EMBL" id="KJ412298">
    <property type="protein sequence ID" value="AHX39341.1"/>
    <property type="molecule type" value="Genomic_DNA"/>
</dbReference>
<dbReference type="PIR" id="S69471">
    <property type="entry name" value="S69471"/>
</dbReference>
<dbReference type="STRING" id="4932.YPR044C"/>
<dbReference type="PaxDb" id="4932-YPR044C"/>
<dbReference type="EnsemblFungi" id="YPR044C_mRNA">
    <property type="protein sequence ID" value="YPR044C"/>
    <property type="gene ID" value="YPR044C"/>
</dbReference>
<dbReference type="AGR" id="SGD:S000006248"/>
<dbReference type="SGD" id="S000006248">
    <property type="gene designation" value="OPI11"/>
</dbReference>
<dbReference type="HOGENOM" id="CLU_2122992_0_0_1"/>
<dbReference type="OMA" id="XKSSFNH"/>